<dbReference type="EMBL" id="CP000802">
    <property type="protein sequence ID" value="ABV08577.1"/>
    <property type="molecule type" value="Genomic_DNA"/>
</dbReference>
<dbReference type="RefSeq" id="WP_001177644.1">
    <property type="nucleotide sequence ID" value="NC_009800.1"/>
</dbReference>
<dbReference type="SMR" id="A8A7S3"/>
<dbReference type="GeneID" id="75202412"/>
<dbReference type="KEGG" id="ecx:EcHS_A4421"/>
<dbReference type="HOGENOM" id="CLU_107144_2_1_6"/>
<dbReference type="GO" id="GO:0005829">
    <property type="term" value="C:cytosol"/>
    <property type="evidence" value="ECO:0007669"/>
    <property type="project" value="TreeGrafter"/>
</dbReference>
<dbReference type="GO" id="GO:0051537">
    <property type="term" value="F:2 iron, 2 sulfur cluster binding"/>
    <property type="evidence" value="ECO:0007669"/>
    <property type="project" value="UniProtKB-KW"/>
</dbReference>
<dbReference type="GO" id="GO:0003700">
    <property type="term" value="F:DNA-binding transcription factor activity"/>
    <property type="evidence" value="ECO:0007669"/>
    <property type="project" value="UniProtKB-UniRule"/>
</dbReference>
<dbReference type="GO" id="GO:0003690">
    <property type="term" value="F:double-stranded DNA binding"/>
    <property type="evidence" value="ECO:0007669"/>
    <property type="project" value="UniProtKB-UniRule"/>
</dbReference>
<dbReference type="GO" id="GO:0005506">
    <property type="term" value="F:iron ion binding"/>
    <property type="evidence" value="ECO:0007669"/>
    <property type="project" value="UniProtKB-UniRule"/>
</dbReference>
<dbReference type="GO" id="GO:0045892">
    <property type="term" value="P:negative regulation of DNA-templated transcription"/>
    <property type="evidence" value="ECO:0007669"/>
    <property type="project" value="InterPro"/>
</dbReference>
<dbReference type="FunFam" id="1.10.10.10:FF:000105">
    <property type="entry name" value="HTH-type transcriptional repressor NsrR"/>
    <property type="match status" value="1"/>
</dbReference>
<dbReference type="Gene3D" id="1.10.10.10">
    <property type="entry name" value="Winged helix-like DNA-binding domain superfamily/Winged helix DNA-binding domain"/>
    <property type="match status" value="1"/>
</dbReference>
<dbReference type="HAMAP" id="MF_01177">
    <property type="entry name" value="HTH_type_NsrR"/>
    <property type="match status" value="1"/>
</dbReference>
<dbReference type="InterPro" id="IPR030489">
    <property type="entry name" value="TR_Rrf2-type_CS"/>
</dbReference>
<dbReference type="InterPro" id="IPR000944">
    <property type="entry name" value="Tscrpt_reg_Rrf2"/>
</dbReference>
<dbReference type="InterPro" id="IPR023761">
    <property type="entry name" value="Tscrpt_rep_HTH_NsrR"/>
</dbReference>
<dbReference type="InterPro" id="IPR036388">
    <property type="entry name" value="WH-like_DNA-bd_sf"/>
</dbReference>
<dbReference type="InterPro" id="IPR036390">
    <property type="entry name" value="WH_DNA-bd_sf"/>
</dbReference>
<dbReference type="NCBIfam" id="NF008240">
    <property type="entry name" value="PRK11014.1"/>
    <property type="match status" value="1"/>
</dbReference>
<dbReference type="NCBIfam" id="TIGR00738">
    <property type="entry name" value="rrf2_super"/>
    <property type="match status" value="1"/>
</dbReference>
<dbReference type="PANTHER" id="PTHR33221:SF4">
    <property type="entry name" value="HTH-TYPE TRANSCRIPTIONAL REPRESSOR NSRR"/>
    <property type="match status" value="1"/>
</dbReference>
<dbReference type="PANTHER" id="PTHR33221">
    <property type="entry name" value="WINGED HELIX-TURN-HELIX TRANSCRIPTIONAL REGULATOR, RRF2 FAMILY"/>
    <property type="match status" value="1"/>
</dbReference>
<dbReference type="Pfam" id="PF02082">
    <property type="entry name" value="Rrf2"/>
    <property type="match status" value="1"/>
</dbReference>
<dbReference type="SUPFAM" id="SSF46785">
    <property type="entry name" value="Winged helix' DNA-binding domain"/>
    <property type="match status" value="1"/>
</dbReference>
<dbReference type="PROSITE" id="PS01332">
    <property type="entry name" value="HTH_RRF2_1"/>
    <property type="match status" value="1"/>
</dbReference>
<dbReference type="PROSITE" id="PS51197">
    <property type="entry name" value="HTH_RRF2_2"/>
    <property type="match status" value="1"/>
</dbReference>
<comment type="function">
    <text evidence="1">Nitric oxide-sensitive repressor of genes involved in protecting the cell against nitrosative stress. May require iron for activity.</text>
</comment>
<comment type="cofactor">
    <cofactor evidence="1">
        <name>[2Fe-2S] cluster</name>
        <dbReference type="ChEBI" id="CHEBI:190135"/>
    </cofactor>
    <text evidence="1">Binds 1 [2Fe-2S] cluster per subunit.</text>
</comment>
<keyword id="KW-0001">2Fe-2S</keyword>
<keyword id="KW-0238">DNA-binding</keyword>
<keyword id="KW-0408">Iron</keyword>
<keyword id="KW-0411">Iron-sulfur</keyword>
<keyword id="KW-0479">Metal-binding</keyword>
<keyword id="KW-0678">Repressor</keyword>
<keyword id="KW-0804">Transcription</keyword>
<keyword id="KW-0805">Transcription regulation</keyword>
<feature type="chain" id="PRO_1000085431" description="HTH-type transcriptional repressor NsrR">
    <location>
        <begin position="1"/>
        <end position="141"/>
    </location>
</feature>
<feature type="domain" description="HTH rrf2-type" evidence="1">
    <location>
        <begin position="2"/>
        <end position="129"/>
    </location>
</feature>
<feature type="DNA-binding region" description="H-T-H motif" evidence="1">
    <location>
        <begin position="28"/>
        <end position="51"/>
    </location>
</feature>
<feature type="binding site" evidence="1">
    <location>
        <position position="91"/>
    </location>
    <ligand>
        <name>[2Fe-2S] cluster</name>
        <dbReference type="ChEBI" id="CHEBI:190135"/>
    </ligand>
</feature>
<feature type="binding site" evidence="1">
    <location>
        <position position="96"/>
    </location>
    <ligand>
        <name>[2Fe-2S] cluster</name>
        <dbReference type="ChEBI" id="CHEBI:190135"/>
    </ligand>
</feature>
<feature type="binding site" evidence="1">
    <location>
        <position position="102"/>
    </location>
    <ligand>
        <name>[2Fe-2S] cluster</name>
        <dbReference type="ChEBI" id="CHEBI:190135"/>
    </ligand>
</feature>
<organism>
    <name type="scientific">Escherichia coli O9:H4 (strain HS)</name>
    <dbReference type="NCBI Taxonomy" id="331112"/>
    <lineage>
        <taxon>Bacteria</taxon>
        <taxon>Pseudomonadati</taxon>
        <taxon>Pseudomonadota</taxon>
        <taxon>Gammaproteobacteria</taxon>
        <taxon>Enterobacterales</taxon>
        <taxon>Enterobacteriaceae</taxon>
        <taxon>Escherichia</taxon>
    </lineage>
</organism>
<proteinExistence type="inferred from homology"/>
<name>NSRR_ECOHS</name>
<protein>
    <recommendedName>
        <fullName evidence="1">HTH-type transcriptional repressor NsrR</fullName>
    </recommendedName>
</protein>
<evidence type="ECO:0000255" key="1">
    <source>
        <dbReference type="HAMAP-Rule" id="MF_01177"/>
    </source>
</evidence>
<accession>A8A7S3</accession>
<reference key="1">
    <citation type="journal article" date="2008" name="J. Bacteriol.">
        <title>The pangenome structure of Escherichia coli: comparative genomic analysis of E. coli commensal and pathogenic isolates.</title>
        <authorList>
            <person name="Rasko D.A."/>
            <person name="Rosovitz M.J."/>
            <person name="Myers G.S.A."/>
            <person name="Mongodin E.F."/>
            <person name="Fricke W.F."/>
            <person name="Gajer P."/>
            <person name="Crabtree J."/>
            <person name="Sebaihia M."/>
            <person name="Thomson N.R."/>
            <person name="Chaudhuri R."/>
            <person name="Henderson I.R."/>
            <person name="Sperandio V."/>
            <person name="Ravel J."/>
        </authorList>
    </citation>
    <scope>NUCLEOTIDE SEQUENCE [LARGE SCALE GENOMIC DNA]</scope>
    <source>
        <strain>HS</strain>
    </source>
</reference>
<sequence length="141" mass="15583">MQLTSFTDYGLRALIYMASLPEGRMTSISEVTDVYGVSRNHMVKIINQLSRAGYVTAVRGKNGGIRLGKSASAIRIGDVVRELEPLSLVNCSSEFCHITPACRLKQALSKAVQSFLTELDNYTLADLVEENQPLYKLLLVE</sequence>
<gene>
    <name evidence="1" type="primary">nsrR</name>
    <name type="ordered locus">EcHS_A4421</name>
</gene>